<feature type="chain" id="PRO_0000370491" description="Pescadillo homolog">
    <location>
        <begin position="1"/>
        <end position="677"/>
    </location>
</feature>
<feature type="domain" description="BRCT" evidence="1">
    <location>
        <begin position="359"/>
        <end position="468"/>
    </location>
</feature>
<feature type="region of interest" description="Disordered" evidence="2">
    <location>
        <begin position="472"/>
        <end position="677"/>
    </location>
</feature>
<feature type="coiled-coil region" evidence="1">
    <location>
        <begin position="609"/>
        <end position="650"/>
    </location>
</feature>
<feature type="compositionally biased region" description="Acidic residues" evidence="2">
    <location>
        <begin position="495"/>
        <end position="518"/>
    </location>
</feature>
<feature type="compositionally biased region" description="Acidic residues" evidence="2">
    <location>
        <begin position="529"/>
        <end position="538"/>
    </location>
</feature>
<feature type="compositionally biased region" description="Acidic residues" evidence="2">
    <location>
        <begin position="545"/>
        <end position="581"/>
    </location>
</feature>
<feature type="compositionally biased region" description="Basic and acidic residues" evidence="2">
    <location>
        <begin position="582"/>
        <end position="592"/>
    </location>
</feature>
<feature type="compositionally biased region" description="Basic residues" evidence="2">
    <location>
        <begin position="612"/>
        <end position="623"/>
    </location>
</feature>
<feature type="compositionally biased region" description="Basic and acidic residues" evidence="2">
    <location>
        <begin position="624"/>
        <end position="635"/>
    </location>
</feature>
<protein>
    <recommendedName>
        <fullName evidence="1">Pescadillo homolog</fullName>
    </recommendedName>
    <alternativeName>
        <fullName evidence="1">Nucleolar protein 7 homolog</fullName>
    </alternativeName>
</protein>
<evidence type="ECO:0000255" key="1">
    <source>
        <dbReference type="HAMAP-Rule" id="MF_03028"/>
    </source>
</evidence>
<evidence type="ECO:0000256" key="2">
    <source>
        <dbReference type="SAM" id="MobiDB-lite"/>
    </source>
</evidence>
<evidence type="ECO:0000305" key="3"/>
<name>PESC_EMENI</name>
<dbReference type="EMBL" id="AACD01000062">
    <property type="protein sequence ID" value="EAA59092.1"/>
    <property type="status" value="ALT_SEQ"/>
    <property type="molecule type" value="Genomic_DNA"/>
</dbReference>
<dbReference type="EMBL" id="BN001302">
    <property type="protein sequence ID" value="CBF75294.1"/>
    <property type="molecule type" value="Genomic_DNA"/>
</dbReference>
<dbReference type="RefSeq" id="XP_661431.1">
    <property type="nucleotide sequence ID" value="XM_656339.1"/>
</dbReference>
<dbReference type="SMR" id="Q5B6K3"/>
<dbReference type="FunCoup" id="Q5B6K3">
    <property type="interactions" value="1236"/>
</dbReference>
<dbReference type="STRING" id="227321.Q5B6K3"/>
<dbReference type="EnsemblFungi" id="CBF75294">
    <property type="protein sequence ID" value="CBF75294"/>
    <property type="gene ID" value="ANIA_03827"/>
</dbReference>
<dbReference type="KEGG" id="ani:ANIA_03827"/>
<dbReference type="VEuPathDB" id="FungiDB:AN3827"/>
<dbReference type="eggNOG" id="KOG2481">
    <property type="taxonomic scope" value="Eukaryota"/>
</dbReference>
<dbReference type="HOGENOM" id="CLU_019619_1_1_1"/>
<dbReference type="InParanoid" id="Q5B6K3"/>
<dbReference type="OMA" id="QKVTWIV"/>
<dbReference type="OrthoDB" id="10264910at2759"/>
<dbReference type="Proteomes" id="UP000000560">
    <property type="component" value="Chromosome II"/>
</dbReference>
<dbReference type="GO" id="GO:0005654">
    <property type="term" value="C:nucleoplasm"/>
    <property type="evidence" value="ECO:0007669"/>
    <property type="project" value="UniProtKB-SubCell"/>
</dbReference>
<dbReference type="GO" id="GO:0070545">
    <property type="term" value="C:PeBoW complex"/>
    <property type="evidence" value="ECO:0000318"/>
    <property type="project" value="GO_Central"/>
</dbReference>
<dbReference type="GO" id="GO:0030687">
    <property type="term" value="C:preribosome, large subunit precursor"/>
    <property type="evidence" value="ECO:0007669"/>
    <property type="project" value="UniProtKB-UniRule"/>
</dbReference>
<dbReference type="GO" id="GO:0043021">
    <property type="term" value="F:ribonucleoprotein complex binding"/>
    <property type="evidence" value="ECO:0007669"/>
    <property type="project" value="UniProtKB-UniRule"/>
</dbReference>
<dbReference type="GO" id="GO:0003723">
    <property type="term" value="F:RNA binding"/>
    <property type="evidence" value="ECO:0000318"/>
    <property type="project" value="GO_Central"/>
</dbReference>
<dbReference type="GO" id="GO:0000466">
    <property type="term" value="P:maturation of 5.8S rRNA from tricistronic rRNA transcript (SSU-rRNA, 5.8S rRNA, LSU-rRNA)"/>
    <property type="evidence" value="ECO:0007669"/>
    <property type="project" value="UniProtKB-UniRule"/>
</dbReference>
<dbReference type="GO" id="GO:0000463">
    <property type="term" value="P:maturation of LSU-rRNA from tricistronic rRNA transcript (SSU-rRNA, 5.8S rRNA, LSU-rRNA)"/>
    <property type="evidence" value="ECO:0000318"/>
    <property type="project" value="GO_Central"/>
</dbReference>
<dbReference type="CDD" id="cd17709">
    <property type="entry name" value="BRCT_pescadillo_like"/>
    <property type="match status" value="1"/>
</dbReference>
<dbReference type="FunFam" id="3.40.50.10190:FF:000056">
    <property type="entry name" value="Pescadillo homolog"/>
    <property type="match status" value="1"/>
</dbReference>
<dbReference type="Gene3D" id="3.40.50.10190">
    <property type="entry name" value="BRCT domain"/>
    <property type="match status" value="1"/>
</dbReference>
<dbReference type="HAMAP" id="MF_03028">
    <property type="entry name" value="Pescadillo"/>
    <property type="match status" value="1"/>
</dbReference>
<dbReference type="InterPro" id="IPR001357">
    <property type="entry name" value="BRCT_dom"/>
</dbReference>
<dbReference type="InterPro" id="IPR036420">
    <property type="entry name" value="BRCT_dom_sf"/>
</dbReference>
<dbReference type="InterPro" id="IPR010613">
    <property type="entry name" value="PES"/>
</dbReference>
<dbReference type="PANTHER" id="PTHR12221">
    <property type="entry name" value="PESCADILLO - RELATED"/>
    <property type="match status" value="1"/>
</dbReference>
<dbReference type="PANTHER" id="PTHR12221:SF6">
    <property type="entry name" value="PESCADILLO HOMOLOG"/>
    <property type="match status" value="1"/>
</dbReference>
<dbReference type="Pfam" id="PF06732">
    <property type="entry name" value="Pescadillo_N"/>
    <property type="match status" value="1"/>
</dbReference>
<dbReference type="SUPFAM" id="SSF52113">
    <property type="entry name" value="BRCT domain"/>
    <property type="match status" value="1"/>
</dbReference>
<dbReference type="PROSITE" id="PS50172">
    <property type="entry name" value="BRCT"/>
    <property type="match status" value="1"/>
</dbReference>
<gene>
    <name type="primary">nop7</name>
    <name type="ORF">AN3827</name>
</gene>
<proteinExistence type="inferred from homology"/>
<keyword id="KW-0175">Coiled coil</keyword>
<keyword id="KW-0539">Nucleus</keyword>
<keyword id="KW-1185">Reference proteome</keyword>
<keyword id="KW-0690">Ribosome biogenesis</keyword>
<keyword id="KW-0698">rRNA processing</keyword>
<organism>
    <name type="scientific">Emericella nidulans (strain FGSC A4 / ATCC 38163 / CBS 112.46 / NRRL 194 / M139)</name>
    <name type="common">Aspergillus nidulans</name>
    <dbReference type="NCBI Taxonomy" id="227321"/>
    <lineage>
        <taxon>Eukaryota</taxon>
        <taxon>Fungi</taxon>
        <taxon>Dikarya</taxon>
        <taxon>Ascomycota</taxon>
        <taxon>Pezizomycotina</taxon>
        <taxon>Eurotiomycetes</taxon>
        <taxon>Eurotiomycetidae</taxon>
        <taxon>Eurotiales</taxon>
        <taxon>Aspergillaceae</taxon>
        <taxon>Aspergillus</taxon>
        <taxon>Aspergillus subgen. Nidulantes</taxon>
    </lineage>
</organism>
<comment type="function">
    <text evidence="1">Component of the NOP7 complex, which is required for maturation of the 25S and 5.8S ribosomal RNAs and formation of the 60S ribosome.</text>
</comment>
<comment type="subunit">
    <text evidence="1">Component of the NOP7 complex, composed of erb1, nop7 and ytm1. The complex is held together by erb1, which interacts with nop7 via its N-terminal domain and with ytm1 via a high-affinity interaction between the seven-bladed beta-propeller domains of the 2 proteins. The NOP7 complex associates with the 66S pre-ribosome.</text>
</comment>
<comment type="subcellular location">
    <subcellularLocation>
        <location evidence="1">Nucleus</location>
        <location evidence="1">Nucleolus</location>
    </subcellularLocation>
    <subcellularLocation>
        <location evidence="1">Nucleus</location>
        <location evidence="1">Nucleoplasm</location>
    </subcellularLocation>
</comment>
<comment type="similarity">
    <text evidence="1">Belongs to the pescadillo family.</text>
</comment>
<comment type="sequence caution" evidence="3">
    <conflict type="erroneous gene model prediction">
        <sequence resource="EMBL-CDS" id="EAA59092"/>
    </conflict>
</comment>
<sequence>MAKIKKKGTSGQAKNYITRTQAVRKLQISLPDFRRLCIFKGIYPREPRNKKKASKSATQSTTFYYTKDIQYLLHEPLLRKFREQKALAKKIARSLGRGEVSDAARLEKNHAPKLTLDHVIKERYPTFIDALRDLDDALSLLFLFANLPSTSHVPPKTIALCQRVTHEFQHYLITTNSLRKSFLSIKGIYYQATIQGQDIMWLVPYRFVQRVNGDVDYRIMATFVEFYTTLLGFVNYRLYSSIGLRYPPKFDTRLDENGAELAAFTLEGRTVGDAPKAIEPAKSSSDAANQEVSAEVQKKVDNVIKKAGLDQASSEQPTETAEEVTDAIDKFETTAPEADTLPQPDMSGDQAGSLFAPFTFYISREAPKTPLEFILRAFGCKRIGWDTVLGGGAFTHNEADPRITHQIVDRPSLPESSLPSIPAAATDGGAVQKVKPGTRVPGRTYVQPQWVWDCINEGKLLRPDLYAPGATLPPHLSPWVNPKKGGYDPRASLAEQEEDGEADIDAEEESDEEMEEAGEEKPAPTAANESEDSEDESVDGGMDVAETDDDDSESEEEEEEEDEFAGIDDEDAGSESEDEEETARTQHQKELEAEAAGLPFSSSGAGDDAAAKKKSQAKKRAAKKRQEEEELERQKMMMSRKKRKLLEKMMYSNKKTAEESAKLRSKRRKIEKGAAGK</sequence>
<reference key="1">
    <citation type="journal article" date="2005" name="Nature">
        <title>Sequencing of Aspergillus nidulans and comparative analysis with A. fumigatus and A. oryzae.</title>
        <authorList>
            <person name="Galagan J.E."/>
            <person name="Calvo S.E."/>
            <person name="Cuomo C."/>
            <person name="Ma L.-J."/>
            <person name="Wortman J.R."/>
            <person name="Batzoglou S."/>
            <person name="Lee S.-I."/>
            <person name="Bastuerkmen M."/>
            <person name="Spevak C.C."/>
            <person name="Clutterbuck J."/>
            <person name="Kapitonov V."/>
            <person name="Jurka J."/>
            <person name="Scazzocchio C."/>
            <person name="Farman M.L."/>
            <person name="Butler J."/>
            <person name="Purcell S."/>
            <person name="Harris S."/>
            <person name="Braus G.H."/>
            <person name="Draht O."/>
            <person name="Busch S."/>
            <person name="D'Enfert C."/>
            <person name="Bouchier C."/>
            <person name="Goldman G.H."/>
            <person name="Bell-Pedersen D."/>
            <person name="Griffiths-Jones S."/>
            <person name="Doonan J.H."/>
            <person name="Yu J."/>
            <person name="Vienken K."/>
            <person name="Pain A."/>
            <person name="Freitag M."/>
            <person name="Selker E.U."/>
            <person name="Archer D.B."/>
            <person name="Penalva M.A."/>
            <person name="Oakley B.R."/>
            <person name="Momany M."/>
            <person name="Tanaka T."/>
            <person name="Kumagai T."/>
            <person name="Asai K."/>
            <person name="Machida M."/>
            <person name="Nierman W.C."/>
            <person name="Denning D.W."/>
            <person name="Caddick M.X."/>
            <person name="Hynes M."/>
            <person name="Paoletti M."/>
            <person name="Fischer R."/>
            <person name="Miller B.L."/>
            <person name="Dyer P.S."/>
            <person name="Sachs M.S."/>
            <person name="Osmani S.A."/>
            <person name="Birren B.W."/>
        </authorList>
    </citation>
    <scope>NUCLEOTIDE SEQUENCE [LARGE SCALE GENOMIC DNA]</scope>
    <source>
        <strain>FGSC A4 / ATCC 38163 / CBS 112.46 / NRRL 194 / M139</strain>
    </source>
</reference>
<reference key="2">
    <citation type="journal article" date="2009" name="Fungal Genet. Biol.">
        <title>The 2008 update of the Aspergillus nidulans genome annotation: a community effort.</title>
        <authorList>
            <person name="Wortman J.R."/>
            <person name="Gilsenan J.M."/>
            <person name="Joardar V."/>
            <person name="Deegan J."/>
            <person name="Clutterbuck J."/>
            <person name="Andersen M.R."/>
            <person name="Archer D."/>
            <person name="Bencina M."/>
            <person name="Braus G."/>
            <person name="Coutinho P."/>
            <person name="von Dohren H."/>
            <person name="Doonan J."/>
            <person name="Driessen A.J."/>
            <person name="Durek P."/>
            <person name="Espeso E."/>
            <person name="Fekete E."/>
            <person name="Flipphi M."/>
            <person name="Estrada C.G."/>
            <person name="Geysens S."/>
            <person name="Goldman G."/>
            <person name="de Groot P.W."/>
            <person name="Hansen K."/>
            <person name="Harris S.D."/>
            <person name="Heinekamp T."/>
            <person name="Helmstaedt K."/>
            <person name="Henrissat B."/>
            <person name="Hofmann G."/>
            <person name="Homan T."/>
            <person name="Horio T."/>
            <person name="Horiuchi H."/>
            <person name="James S."/>
            <person name="Jones M."/>
            <person name="Karaffa L."/>
            <person name="Karanyi Z."/>
            <person name="Kato M."/>
            <person name="Keller N."/>
            <person name="Kelly D.E."/>
            <person name="Kiel J.A."/>
            <person name="Kim J.M."/>
            <person name="van der Klei I.J."/>
            <person name="Klis F.M."/>
            <person name="Kovalchuk A."/>
            <person name="Krasevec N."/>
            <person name="Kubicek C.P."/>
            <person name="Liu B."/>
            <person name="Maccabe A."/>
            <person name="Meyer V."/>
            <person name="Mirabito P."/>
            <person name="Miskei M."/>
            <person name="Mos M."/>
            <person name="Mullins J."/>
            <person name="Nelson D.R."/>
            <person name="Nielsen J."/>
            <person name="Oakley B.R."/>
            <person name="Osmani S.A."/>
            <person name="Pakula T."/>
            <person name="Paszewski A."/>
            <person name="Paulsen I."/>
            <person name="Pilsyk S."/>
            <person name="Pocsi I."/>
            <person name="Punt P.J."/>
            <person name="Ram A.F."/>
            <person name="Ren Q."/>
            <person name="Robellet X."/>
            <person name="Robson G."/>
            <person name="Seiboth B."/>
            <person name="van Solingen P."/>
            <person name="Specht T."/>
            <person name="Sun J."/>
            <person name="Taheri-Talesh N."/>
            <person name="Takeshita N."/>
            <person name="Ussery D."/>
            <person name="vanKuyk P.A."/>
            <person name="Visser H."/>
            <person name="van de Vondervoort P.J."/>
            <person name="de Vries R.P."/>
            <person name="Walton J."/>
            <person name="Xiang X."/>
            <person name="Xiong Y."/>
            <person name="Zeng A.P."/>
            <person name="Brandt B.W."/>
            <person name="Cornell M.J."/>
            <person name="van den Hondel C.A."/>
            <person name="Visser J."/>
            <person name="Oliver S.G."/>
            <person name="Turner G."/>
        </authorList>
    </citation>
    <scope>GENOME REANNOTATION</scope>
    <source>
        <strain>FGSC A4 / ATCC 38163 / CBS 112.46 / NRRL 194 / M139</strain>
    </source>
</reference>
<accession>Q5B6K3</accession>
<accession>C8V6R0</accession>